<feature type="chain" id="PRO_0000232020" description="Phenylalanine--tRNA ligase alpha subunit">
    <location>
        <begin position="1"/>
        <end position="358"/>
    </location>
</feature>
<feature type="binding site" evidence="1">
    <location>
        <position position="258"/>
    </location>
    <ligand>
        <name>Mg(2+)</name>
        <dbReference type="ChEBI" id="CHEBI:18420"/>
        <note>shared with beta subunit</note>
    </ligand>
</feature>
<organism>
    <name type="scientific">Rhodospirillum rubrum (strain ATCC 11170 / ATH 1.1.1 / DSM 467 / LMG 4362 / NCIMB 8255 / S1)</name>
    <dbReference type="NCBI Taxonomy" id="269796"/>
    <lineage>
        <taxon>Bacteria</taxon>
        <taxon>Pseudomonadati</taxon>
        <taxon>Pseudomonadota</taxon>
        <taxon>Alphaproteobacteria</taxon>
        <taxon>Rhodospirillales</taxon>
        <taxon>Rhodospirillaceae</taxon>
        <taxon>Rhodospirillum</taxon>
    </lineage>
</organism>
<proteinExistence type="inferred from homology"/>
<dbReference type="EC" id="6.1.1.20" evidence="1"/>
<dbReference type="EMBL" id="CP000230">
    <property type="protein sequence ID" value="ABC24317.1"/>
    <property type="molecule type" value="Genomic_DNA"/>
</dbReference>
<dbReference type="RefSeq" id="WP_011391270.1">
    <property type="nucleotide sequence ID" value="NC_007643.1"/>
</dbReference>
<dbReference type="RefSeq" id="YP_428604.1">
    <property type="nucleotide sequence ID" value="NC_007643.1"/>
</dbReference>
<dbReference type="SMR" id="Q2RNH8"/>
<dbReference type="STRING" id="269796.Rru_A3523"/>
<dbReference type="EnsemblBacteria" id="ABC24317">
    <property type="protein sequence ID" value="ABC24317"/>
    <property type="gene ID" value="Rru_A3523"/>
</dbReference>
<dbReference type="KEGG" id="rru:Rru_A3523"/>
<dbReference type="PATRIC" id="fig|269796.9.peg.3640"/>
<dbReference type="eggNOG" id="COG0016">
    <property type="taxonomic scope" value="Bacteria"/>
</dbReference>
<dbReference type="HOGENOM" id="CLU_025086_0_1_5"/>
<dbReference type="PhylomeDB" id="Q2RNH8"/>
<dbReference type="Proteomes" id="UP000001929">
    <property type="component" value="Chromosome"/>
</dbReference>
<dbReference type="GO" id="GO:0005737">
    <property type="term" value="C:cytoplasm"/>
    <property type="evidence" value="ECO:0007669"/>
    <property type="project" value="UniProtKB-SubCell"/>
</dbReference>
<dbReference type="GO" id="GO:0005524">
    <property type="term" value="F:ATP binding"/>
    <property type="evidence" value="ECO:0007669"/>
    <property type="project" value="UniProtKB-UniRule"/>
</dbReference>
<dbReference type="GO" id="GO:0000287">
    <property type="term" value="F:magnesium ion binding"/>
    <property type="evidence" value="ECO:0007669"/>
    <property type="project" value="UniProtKB-UniRule"/>
</dbReference>
<dbReference type="GO" id="GO:0004826">
    <property type="term" value="F:phenylalanine-tRNA ligase activity"/>
    <property type="evidence" value="ECO:0007669"/>
    <property type="project" value="UniProtKB-UniRule"/>
</dbReference>
<dbReference type="GO" id="GO:0000049">
    <property type="term" value="F:tRNA binding"/>
    <property type="evidence" value="ECO:0007669"/>
    <property type="project" value="InterPro"/>
</dbReference>
<dbReference type="GO" id="GO:0006432">
    <property type="term" value="P:phenylalanyl-tRNA aminoacylation"/>
    <property type="evidence" value="ECO:0007669"/>
    <property type="project" value="UniProtKB-UniRule"/>
</dbReference>
<dbReference type="CDD" id="cd00496">
    <property type="entry name" value="PheRS_alpha_core"/>
    <property type="match status" value="1"/>
</dbReference>
<dbReference type="FunFam" id="3.30.930.10:FF:000003">
    <property type="entry name" value="Phenylalanine--tRNA ligase alpha subunit"/>
    <property type="match status" value="1"/>
</dbReference>
<dbReference type="Gene3D" id="3.30.930.10">
    <property type="entry name" value="Bira Bifunctional Protein, Domain 2"/>
    <property type="match status" value="1"/>
</dbReference>
<dbReference type="HAMAP" id="MF_00281">
    <property type="entry name" value="Phe_tRNA_synth_alpha1"/>
    <property type="match status" value="1"/>
</dbReference>
<dbReference type="InterPro" id="IPR006195">
    <property type="entry name" value="aa-tRNA-synth_II"/>
</dbReference>
<dbReference type="InterPro" id="IPR045864">
    <property type="entry name" value="aa-tRNA-synth_II/BPL/LPL"/>
</dbReference>
<dbReference type="InterPro" id="IPR004529">
    <property type="entry name" value="Phe-tRNA-synth_IIc_asu"/>
</dbReference>
<dbReference type="InterPro" id="IPR004188">
    <property type="entry name" value="Phe-tRNA_ligase_II_N"/>
</dbReference>
<dbReference type="InterPro" id="IPR022911">
    <property type="entry name" value="Phe_tRNA_ligase_alpha1_bac"/>
</dbReference>
<dbReference type="InterPro" id="IPR002319">
    <property type="entry name" value="Phenylalanyl-tRNA_Synthase"/>
</dbReference>
<dbReference type="InterPro" id="IPR010978">
    <property type="entry name" value="tRNA-bd_arm"/>
</dbReference>
<dbReference type="NCBIfam" id="TIGR00468">
    <property type="entry name" value="pheS"/>
    <property type="match status" value="1"/>
</dbReference>
<dbReference type="PANTHER" id="PTHR11538:SF41">
    <property type="entry name" value="PHENYLALANINE--TRNA LIGASE, MITOCHONDRIAL"/>
    <property type="match status" value="1"/>
</dbReference>
<dbReference type="PANTHER" id="PTHR11538">
    <property type="entry name" value="PHENYLALANYL-TRNA SYNTHETASE"/>
    <property type="match status" value="1"/>
</dbReference>
<dbReference type="Pfam" id="PF02912">
    <property type="entry name" value="Phe_tRNA-synt_N"/>
    <property type="match status" value="1"/>
</dbReference>
<dbReference type="Pfam" id="PF01409">
    <property type="entry name" value="tRNA-synt_2d"/>
    <property type="match status" value="1"/>
</dbReference>
<dbReference type="SUPFAM" id="SSF55681">
    <property type="entry name" value="Class II aaRS and biotin synthetases"/>
    <property type="match status" value="1"/>
</dbReference>
<dbReference type="SUPFAM" id="SSF46589">
    <property type="entry name" value="tRNA-binding arm"/>
    <property type="match status" value="1"/>
</dbReference>
<dbReference type="PROSITE" id="PS50862">
    <property type="entry name" value="AA_TRNA_LIGASE_II"/>
    <property type="match status" value="1"/>
</dbReference>
<name>SYFA_RHORT</name>
<gene>
    <name evidence="1" type="primary">pheS</name>
    <name type="ordered locus">Rru_A3523</name>
</gene>
<accession>Q2RNH8</accession>
<reference key="1">
    <citation type="journal article" date="2011" name="Stand. Genomic Sci.">
        <title>Complete genome sequence of Rhodospirillum rubrum type strain (S1).</title>
        <authorList>
            <person name="Munk A.C."/>
            <person name="Copeland A."/>
            <person name="Lucas S."/>
            <person name="Lapidus A."/>
            <person name="Del Rio T.G."/>
            <person name="Barry K."/>
            <person name="Detter J.C."/>
            <person name="Hammon N."/>
            <person name="Israni S."/>
            <person name="Pitluck S."/>
            <person name="Brettin T."/>
            <person name="Bruce D."/>
            <person name="Han C."/>
            <person name="Tapia R."/>
            <person name="Gilna P."/>
            <person name="Schmutz J."/>
            <person name="Larimer F."/>
            <person name="Land M."/>
            <person name="Kyrpides N.C."/>
            <person name="Mavromatis K."/>
            <person name="Richardson P."/>
            <person name="Rohde M."/>
            <person name="Goeker M."/>
            <person name="Klenk H.P."/>
            <person name="Zhang Y."/>
            <person name="Roberts G.P."/>
            <person name="Reslewic S."/>
            <person name="Schwartz D.C."/>
        </authorList>
    </citation>
    <scope>NUCLEOTIDE SEQUENCE [LARGE SCALE GENOMIC DNA]</scope>
    <source>
        <strain>ATCC 11170 / ATH 1.1.1 / DSM 467 / LMG 4362 / NCIMB 8255 / S1</strain>
    </source>
</reference>
<sequence length="358" mass="39265">MDNVEDLRGTLLSAVAEAGDLDALDAIRVSALGKKGQITGLMKTLGAMDPEARKAAGQALNLVKDEIAAALDARKADLAAAALEAKLARERLDVSLAPAPEATGAIHPISQTWEEVVAIFAQMGFEVAEGPEIEDDFHNFTALNFPPGHPARAMHDTFFLPTREDGSRHLLRTHTSPVQIRTMMGRKPPIRILAPGRTYRCDSDMTHTPMFHQFEGLVIDKATHFGHLKGCLHEFVRAYFEVDDLPMRFRPSFFPFTEPSAEVDIGCSRKGGALKIGAGDSWLEILGCGMVHPNVLTACGLDPEEYQGFAFGMGLERIAMLKYGIPDLRTFFESDLRWLRHYGFAALDLPTLHGGLSR</sequence>
<comment type="catalytic activity">
    <reaction evidence="1">
        <text>tRNA(Phe) + L-phenylalanine + ATP = L-phenylalanyl-tRNA(Phe) + AMP + diphosphate + H(+)</text>
        <dbReference type="Rhea" id="RHEA:19413"/>
        <dbReference type="Rhea" id="RHEA-COMP:9668"/>
        <dbReference type="Rhea" id="RHEA-COMP:9699"/>
        <dbReference type="ChEBI" id="CHEBI:15378"/>
        <dbReference type="ChEBI" id="CHEBI:30616"/>
        <dbReference type="ChEBI" id="CHEBI:33019"/>
        <dbReference type="ChEBI" id="CHEBI:58095"/>
        <dbReference type="ChEBI" id="CHEBI:78442"/>
        <dbReference type="ChEBI" id="CHEBI:78531"/>
        <dbReference type="ChEBI" id="CHEBI:456215"/>
        <dbReference type="EC" id="6.1.1.20"/>
    </reaction>
</comment>
<comment type="cofactor">
    <cofactor evidence="1">
        <name>Mg(2+)</name>
        <dbReference type="ChEBI" id="CHEBI:18420"/>
    </cofactor>
    <text evidence="1">Binds 2 magnesium ions per tetramer.</text>
</comment>
<comment type="subunit">
    <text evidence="1">Tetramer of two alpha and two beta subunits.</text>
</comment>
<comment type="subcellular location">
    <subcellularLocation>
        <location evidence="1">Cytoplasm</location>
    </subcellularLocation>
</comment>
<comment type="similarity">
    <text evidence="1">Belongs to the class-II aminoacyl-tRNA synthetase family. Phe-tRNA synthetase alpha subunit type 1 subfamily.</text>
</comment>
<keyword id="KW-0030">Aminoacyl-tRNA synthetase</keyword>
<keyword id="KW-0067">ATP-binding</keyword>
<keyword id="KW-0963">Cytoplasm</keyword>
<keyword id="KW-0436">Ligase</keyword>
<keyword id="KW-0460">Magnesium</keyword>
<keyword id="KW-0479">Metal-binding</keyword>
<keyword id="KW-0547">Nucleotide-binding</keyword>
<keyword id="KW-0648">Protein biosynthesis</keyword>
<keyword id="KW-1185">Reference proteome</keyword>
<evidence type="ECO:0000255" key="1">
    <source>
        <dbReference type="HAMAP-Rule" id="MF_00281"/>
    </source>
</evidence>
<protein>
    <recommendedName>
        <fullName evidence="1">Phenylalanine--tRNA ligase alpha subunit</fullName>
        <ecNumber evidence="1">6.1.1.20</ecNumber>
    </recommendedName>
    <alternativeName>
        <fullName evidence="1">Phenylalanyl-tRNA synthetase alpha subunit</fullName>
        <shortName evidence="1">PheRS</shortName>
    </alternativeName>
</protein>